<sequence length="94" mass="10380">MAVLTDEQVDAALHDLNGWQRAGGVLRRSIKFPTFMAGIDAVRRVAERAEEVNHHPDIDIRWRTVTFALVTHAVGGITENDIAMAHDIDAMFGA</sequence>
<proteinExistence type="inferred from homology"/>
<protein>
    <recommendedName>
        <fullName>Putative pterin-4-alpha-carbinolamine dehydratase</fullName>
        <shortName>PHS</shortName>
        <ecNumber>4.2.1.96</ecNumber>
    </recommendedName>
</protein>
<comment type="catalytic activity">
    <reaction>
        <text>(4aS,6R)-4a-hydroxy-L-erythro-5,6,7,8-tetrahydrobiopterin = (6R)-L-erythro-6,7-dihydrobiopterin + H2O</text>
        <dbReference type="Rhea" id="RHEA:11920"/>
        <dbReference type="ChEBI" id="CHEBI:15377"/>
        <dbReference type="ChEBI" id="CHEBI:15642"/>
        <dbReference type="ChEBI" id="CHEBI:43120"/>
        <dbReference type="EC" id="4.2.1.96"/>
    </reaction>
</comment>
<comment type="similarity">
    <text evidence="1">Belongs to the pterin-4-alpha-carbinolamine dehydratase family.</text>
</comment>
<comment type="sequence caution" evidence="1">
    <conflict type="erroneous initiation">
        <sequence resource="EMBL-CDS" id="AAK45453"/>
    </conflict>
</comment>
<name>PHS_MYCTO</name>
<gene>
    <name type="ordered locus">MT1196</name>
</gene>
<reference key="1">
    <citation type="journal article" date="2002" name="J. Bacteriol.">
        <title>Whole-genome comparison of Mycobacterium tuberculosis clinical and laboratory strains.</title>
        <authorList>
            <person name="Fleischmann R.D."/>
            <person name="Alland D."/>
            <person name="Eisen J.A."/>
            <person name="Carpenter L."/>
            <person name="White O."/>
            <person name="Peterson J.D."/>
            <person name="DeBoy R.T."/>
            <person name="Dodson R.J."/>
            <person name="Gwinn M.L."/>
            <person name="Haft D.H."/>
            <person name="Hickey E.K."/>
            <person name="Kolonay J.F."/>
            <person name="Nelson W.C."/>
            <person name="Umayam L.A."/>
            <person name="Ermolaeva M.D."/>
            <person name="Salzberg S.L."/>
            <person name="Delcher A."/>
            <person name="Utterback T.R."/>
            <person name="Weidman J.F."/>
            <person name="Khouri H.M."/>
            <person name="Gill J."/>
            <person name="Mikula A."/>
            <person name="Bishai W."/>
            <person name="Jacobs W.R. Jr."/>
            <person name="Venter J.C."/>
            <person name="Fraser C.M."/>
        </authorList>
    </citation>
    <scope>NUCLEOTIDE SEQUENCE [LARGE SCALE GENOMIC DNA]</scope>
    <source>
        <strain>CDC 1551 / Oshkosh</strain>
    </source>
</reference>
<dbReference type="EC" id="4.2.1.96"/>
<dbReference type="EMBL" id="AE000516">
    <property type="protein sequence ID" value="AAK45453.1"/>
    <property type="status" value="ALT_INIT"/>
    <property type="molecule type" value="Genomic_DNA"/>
</dbReference>
<dbReference type="RefSeq" id="WP_003406082.1">
    <property type="nucleotide sequence ID" value="NZ_KK341227.1"/>
</dbReference>
<dbReference type="SMR" id="P9WI92"/>
<dbReference type="KEGG" id="mtc:MT1196"/>
<dbReference type="PATRIC" id="fig|83331.31.peg.1296"/>
<dbReference type="HOGENOM" id="CLU_081974_4_3_11"/>
<dbReference type="Proteomes" id="UP000001020">
    <property type="component" value="Chromosome"/>
</dbReference>
<dbReference type="GO" id="GO:0008124">
    <property type="term" value="F:4-alpha-hydroxytetrahydrobiopterin dehydratase activity"/>
    <property type="evidence" value="ECO:0007669"/>
    <property type="project" value="UniProtKB-UniRule"/>
</dbReference>
<dbReference type="GO" id="GO:0006729">
    <property type="term" value="P:tetrahydrobiopterin biosynthetic process"/>
    <property type="evidence" value="ECO:0007669"/>
    <property type="project" value="InterPro"/>
</dbReference>
<dbReference type="CDD" id="cd00488">
    <property type="entry name" value="PCD_DCoH"/>
    <property type="match status" value="1"/>
</dbReference>
<dbReference type="Gene3D" id="3.30.1360.20">
    <property type="entry name" value="Transcriptional coactivator/pterin dehydratase"/>
    <property type="match status" value="1"/>
</dbReference>
<dbReference type="HAMAP" id="MF_00434">
    <property type="entry name" value="Pterin_4_alpha"/>
    <property type="match status" value="1"/>
</dbReference>
<dbReference type="InterPro" id="IPR036428">
    <property type="entry name" value="PCD_sf"/>
</dbReference>
<dbReference type="InterPro" id="IPR001533">
    <property type="entry name" value="Pterin_deHydtase"/>
</dbReference>
<dbReference type="NCBIfam" id="NF002017">
    <property type="entry name" value="PRK00823.1-2"/>
    <property type="match status" value="1"/>
</dbReference>
<dbReference type="PANTHER" id="PTHR12599">
    <property type="entry name" value="PTERIN-4-ALPHA-CARBINOLAMINE DEHYDRATASE"/>
    <property type="match status" value="1"/>
</dbReference>
<dbReference type="PANTHER" id="PTHR12599:SF0">
    <property type="entry name" value="PTERIN-4-ALPHA-CARBINOLAMINE DEHYDRATASE"/>
    <property type="match status" value="1"/>
</dbReference>
<dbReference type="Pfam" id="PF01329">
    <property type="entry name" value="Pterin_4a"/>
    <property type="match status" value="1"/>
</dbReference>
<dbReference type="SUPFAM" id="SSF55248">
    <property type="entry name" value="PCD-like"/>
    <property type="match status" value="1"/>
</dbReference>
<accession>P9WI92</accession>
<accession>L0T7H1</accession>
<accession>P0A5S2</accession>
<accession>P58241</accession>
<evidence type="ECO:0000305" key="1"/>
<organism>
    <name type="scientific">Mycobacterium tuberculosis (strain CDC 1551 / Oshkosh)</name>
    <dbReference type="NCBI Taxonomy" id="83331"/>
    <lineage>
        <taxon>Bacteria</taxon>
        <taxon>Bacillati</taxon>
        <taxon>Actinomycetota</taxon>
        <taxon>Actinomycetes</taxon>
        <taxon>Mycobacteriales</taxon>
        <taxon>Mycobacteriaceae</taxon>
        <taxon>Mycobacterium</taxon>
        <taxon>Mycobacterium tuberculosis complex</taxon>
    </lineage>
</organism>
<feature type="chain" id="PRO_0000428047" description="Putative pterin-4-alpha-carbinolamine dehydratase">
    <location>
        <begin position="1"/>
        <end position="94"/>
    </location>
</feature>
<keyword id="KW-0456">Lyase</keyword>
<keyword id="KW-1185">Reference proteome</keyword>